<feature type="chain" id="PRO_0000045864" description="Kininogen">
    <location>
        <begin position="1" status="less than"/>
        <end position="123" status="greater than"/>
    </location>
</feature>
<feature type="peptide" id="PRO_0000006708" description="Bradykinin" evidence="1">
    <location>
        <begin position="85"/>
        <end position="93"/>
    </location>
</feature>
<feature type="non-consecutive residues" evidence="3">
    <location>
        <begin position="19"/>
        <end position="20"/>
    </location>
</feature>
<feature type="non-consecutive residues" evidence="3">
    <location>
        <begin position="36"/>
        <end position="37"/>
    </location>
</feature>
<feature type="non-consecutive residues" evidence="3">
    <location>
        <begin position="50"/>
        <end position="51"/>
    </location>
</feature>
<feature type="non-consecutive residues" evidence="3">
    <location>
        <begin position="57"/>
        <end position="58"/>
    </location>
</feature>
<feature type="non-consecutive residues" evidence="3">
    <location>
        <begin position="83"/>
        <end position="84"/>
    </location>
</feature>
<feature type="non-consecutive residues" evidence="3">
    <location>
        <begin position="93"/>
        <end position="94"/>
    </location>
</feature>
<feature type="non-consecutive residues" evidence="3">
    <location>
        <begin position="102"/>
        <end position="103"/>
    </location>
</feature>
<feature type="non-consecutive residues" evidence="3">
    <location>
        <begin position="114"/>
        <end position="115"/>
    </location>
</feature>
<feature type="non-terminal residue" evidence="3">
    <location>
        <position position="1"/>
    </location>
</feature>
<feature type="non-terminal residue" evidence="3">
    <location>
        <position position="123"/>
    </location>
</feature>
<accession>P83856</accession>
<proteinExistence type="evidence at protein level"/>
<keyword id="KW-0165">Cleavage on pair of basic residues</keyword>
<keyword id="KW-0903">Direct protein sequencing</keyword>
<keyword id="KW-0325">Glycoprotein</keyword>
<keyword id="KW-0646">Protease inhibitor</keyword>
<keyword id="KW-1185">Reference proteome</keyword>
<keyword id="KW-0789">Thiol protease inhibitor</keyword>
<keyword id="KW-0838">Vasoactive</keyword>
<keyword id="KW-0840">Vasodilator</keyword>
<organism evidence="4">
    <name type="scientific">Gadus morhua</name>
    <name type="common">Atlantic cod</name>
    <dbReference type="NCBI Taxonomy" id="8049"/>
    <lineage>
        <taxon>Eukaryota</taxon>
        <taxon>Metazoa</taxon>
        <taxon>Chordata</taxon>
        <taxon>Craniata</taxon>
        <taxon>Vertebrata</taxon>
        <taxon>Euteleostomi</taxon>
        <taxon>Actinopterygii</taxon>
        <taxon>Neopterygii</taxon>
        <taxon>Teleostei</taxon>
        <taxon>Neoteleostei</taxon>
        <taxon>Acanthomorphata</taxon>
        <taxon>Zeiogadaria</taxon>
        <taxon>Gadariae</taxon>
        <taxon>Gadiformes</taxon>
        <taxon>Gadoidei</taxon>
        <taxon>Gadidae</taxon>
        <taxon>Gadus</taxon>
    </lineage>
</organism>
<evidence type="ECO:0000250" key="1">
    <source>
        <dbReference type="UniProtKB" id="P01042"/>
    </source>
</evidence>
<evidence type="ECO:0000269" key="2">
    <source>
    </source>
</evidence>
<evidence type="ECO:0000303" key="3">
    <source>
    </source>
</evidence>
<evidence type="ECO:0000305" key="4"/>
<reference evidence="4" key="1">
    <citation type="journal article" date="2002" name="Eur. J. Biochem.">
        <title>Purification and characterization of novel kininogens from spotted wolffish and Atlantic cod.</title>
        <authorList>
            <person name="Yloenen A."/>
            <person name="Helin J."/>
            <person name="Bogwald J."/>
            <person name="Jaakola A."/>
            <person name="Rinne A."/>
            <person name="Kalkkinen N."/>
        </authorList>
    </citation>
    <scope>PROTEIN SEQUENCE</scope>
    <scope>FUNCTION</scope>
    <scope>GLYCOSYLATION</scope>
    <scope>MASS SPECTROMETRY</scope>
    <source>
        <tissue evidence="2">Skin</tissue>
    </source>
</reference>
<sequence>RHEVPQANLECDEGAMDLKISTGNMVALYQILSASKDSDCPAGGAVTWTDQVVAGLRICMGCPVELDLESEELKVPVAVSISKRRPPGWSPLRAAVTSFNEKEFSPPAPPSRAEYSLYFDMRK</sequence>
<protein>
    <recommendedName>
        <fullName>Kininogen</fullName>
    </recommendedName>
    <component>
        <recommendedName>
            <fullName>Bradykinin</fullName>
        </recommendedName>
    </component>
</protein>
<comment type="function">
    <text evidence="2">Inhibits papain and ficin (cysteine proteinases) but not trypsin (a serine proteinase).</text>
</comment>
<comment type="PTM">
    <text evidence="1">Bradykinin is released from kininogen by kallikrein.</text>
</comment>
<comment type="PTM">
    <text evidence="2">N-glycosylated. Contains sulfated N-acetylglucosamine and O-acetylated sialic acids as terminal elements on biantennary and triantennary N-glycans.</text>
</comment>
<comment type="mass spectrometry">
    <text>The measured range is 1-123.</text>
</comment>
<comment type="caution">
    <text evidence="4">The order of the last 3 peptides shown is unknown.</text>
</comment>
<name>KNG_GADMO</name>
<dbReference type="Proteomes" id="UP000694546">
    <property type="component" value="Unplaced"/>
</dbReference>
<dbReference type="GO" id="GO:0004869">
    <property type="term" value="F:cysteine-type endopeptidase inhibitor activity"/>
    <property type="evidence" value="ECO:0007669"/>
    <property type="project" value="UniProtKB-KW"/>
</dbReference>
<dbReference type="GO" id="GO:0042311">
    <property type="term" value="P:vasodilation"/>
    <property type="evidence" value="ECO:0007669"/>
    <property type="project" value="UniProtKB-KW"/>
</dbReference>